<sequence>MRDNIAKGITAGSNTQQTTYDPTRTEATLTTATTFALRRYDLAGRALYDLDFSKLNPQTPTRDQTGQITFNPFGGFGLSGAAPQQWNEVKDKVPVEVAQDPSNPYRFAVLLVPRSVVYYEQLQRGLALPNQGSSSGSGQQNTTIGAYGLKVKNAEADTAKSNEKLQGYESKSSNGSSSTSTTQRGGSSNENKVKALQVAVKKKSGSQGNSGDQGTEQVELESNDLANAPIKRGSNNNQQVQLKADDFGTAPSSSGSGTQDGTPTPWTPWLTTEQIHNDPAKFAASILILYDAPYARNRTAIDRVDHLDPKVMTANYPPSWRTPKWNHHGLWDWKARDVLLQTTGFFNPRRHPEWFDGGQTVADNEKTGFDVDNSENTKQGFQKEADSDKSAPIALPFEAYFANIGNLTWFEQALLVFGICLS</sequence>
<protein>
    <recommendedName>
        <fullName>Uncharacterized protein MPN_502</fullName>
    </recommendedName>
</protein>
<accession>P75285</accession>
<reference key="1">
    <citation type="journal article" date="1996" name="Nucleic Acids Res.">
        <title>Complete sequence analysis of the genome of the bacterium Mycoplasma pneumoniae.</title>
        <authorList>
            <person name="Himmelreich R."/>
            <person name="Hilbert H."/>
            <person name="Plagens H."/>
            <person name="Pirkl E."/>
            <person name="Li B.-C."/>
            <person name="Herrmann R."/>
        </authorList>
    </citation>
    <scope>NUCLEOTIDE SEQUENCE [LARGE SCALE GENOMIC DNA]</scope>
    <source>
        <strain>ATCC 29342 / M129 / Subtype 1</strain>
    </source>
</reference>
<proteinExistence type="inferred from homology"/>
<gene>
    <name type="ordered locus">MPN_502</name>
    <name type="ORF">MP341</name>
    <name type="ORF">P02_orf422V</name>
</gene>
<dbReference type="EMBL" id="U00089">
    <property type="protein sequence ID" value="AAB95988.1"/>
    <property type="molecule type" value="Genomic_DNA"/>
</dbReference>
<dbReference type="PIR" id="S73667">
    <property type="entry name" value="S73667"/>
</dbReference>
<dbReference type="RefSeq" id="NP_110190.1">
    <property type="nucleotide sequence ID" value="NC_000912.1"/>
</dbReference>
<dbReference type="SMR" id="P75285"/>
<dbReference type="EnsemblBacteria" id="AAB95988">
    <property type="protein sequence ID" value="AAB95988"/>
    <property type="gene ID" value="MPN_502"/>
</dbReference>
<dbReference type="KEGG" id="mpn:MPN_502"/>
<dbReference type="PATRIC" id="fig|272634.6.peg.548"/>
<dbReference type="HOGENOM" id="CLU_053128_0_0_14"/>
<dbReference type="BioCyc" id="MPNE272634:G1GJ3-823-MONOMER"/>
<dbReference type="Proteomes" id="UP000000808">
    <property type="component" value="Chromosome"/>
</dbReference>
<dbReference type="InterPro" id="IPR022116">
    <property type="entry name" value="P1_N"/>
</dbReference>
<dbReference type="Pfam" id="PF12378">
    <property type="entry name" value="P1_N"/>
    <property type="match status" value="1"/>
</dbReference>
<name>Y502_MYCPN</name>
<feature type="chain" id="PRO_0000210689" description="Uncharacterized protein MPN_502">
    <location>
        <begin position="1"/>
        <end position="422"/>
    </location>
</feature>
<feature type="region of interest" description="Disordered" evidence="1">
    <location>
        <begin position="1"/>
        <end position="21"/>
    </location>
</feature>
<feature type="region of interest" description="Disordered" evidence="1">
    <location>
        <begin position="158"/>
        <end position="218"/>
    </location>
</feature>
<feature type="region of interest" description="Disordered" evidence="1">
    <location>
        <begin position="246"/>
        <end position="271"/>
    </location>
</feature>
<feature type="compositionally biased region" description="Polar residues" evidence="1">
    <location>
        <begin position="11"/>
        <end position="21"/>
    </location>
</feature>
<feature type="compositionally biased region" description="Low complexity" evidence="1">
    <location>
        <begin position="170"/>
        <end position="199"/>
    </location>
</feature>
<feature type="compositionally biased region" description="Polar residues" evidence="1">
    <location>
        <begin position="205"/>
        <end position="216"/>
    </location>
</feature>
<feature type="compositionally biased region" description="Polar residues" evidence="1">
    <location>
        <begin position="250"/>
        <end position="261"/>
    </location>
</feature>
<feature type="compositionally biased region" description="Low complexity" evidence="1">
    <location>
        <begin position="262"/>
        <end position="271"/>
    </location>
</feature>
<evidence type="ECO:0000256" key="1">
    <source>
        <dbReference type="SAM" id="MobiDB-lite"/>
    </source>
</evidence>
<evidence type="ECO:0000305" key="2"/>
<keyword id="KW-1185">Reference proteome</keyword>
<organism>
    <name type="scientific">Mycoplasma pneumoniae (strain ATCC 29342 / M129 / Subtype 1)</name>
    <name type="common">Mycoplasmoides pneumoniae</name>
    <dbReference type="NCBI Taxonomy" id="272634"/>
    <lineage>
        <taxon>Bacteria</taxon>
        <taxon>Bacillati</taxon>
        <taxon>Mycoplasmatota</taxon>
        <taxon>Mycoplasmoidales</taxon>
        <taxon>Mycoplasmoidaceae</taxon>
        <taxon>Mycoplasmoides</taxon>
    </lineage>
</organism>
<comment type="similarity">
    <text evidence="2">Belongs to the adhesin P1 family.</text>
</comment>